<evidence type="ECO:0000250" key="1">
    <source>
        <dbReference type="UniProtKB" id="P48729"/>
    </source>
</evidence>
<evidence type="ECO:0000250" key="2">
    <source>
        <dbReference type="UniProtKB" id="P48730"/>
    </source>
</evidence>
<evidence type="ECO:0000250" key="3">
    <source>
        <dbReference type="UniProtKB" id="P78368"/>
    </source>
</evidence>
<evidence type="ECO:0000250" key="4">
    <source>
        <dbReference type="UniProtKB" id="Q8BVP5"/>
    </source>
</evidence>
<evidence type="ECO:0000255" key="5">
    <source>
        <dbReference type="PROSITE-ProRule" id="PRU00159"/>
    </source>
</evidence>
<evidence type="ECO:0000255" key="6">
    <source>
        <dbReference type="PROSITE-ProRule" id="PRU10027"/>
    </source>
</evidence>
<evidence type="ECO:0000256" key="7">
    <source>
        <dbReference type="SAM" id="MobiDB-lite"/>
    </source>
</evidence>
<evidence type="ECO:0000269" key="8">
    <source>
    </source>
</evidence>
<evidence type="ECO:0000305" key="9"/>
<dbReference type="EC" id="2.7.11.1"/>
<dbReference type="EMBL" id="U22297">
    <property type="protein sequence ID" value="AAC52201.1"/>
    <property type="molecule type" value="mRNA"/>
</dbReference>
<dbReference type="EMBL" id="BC072533">
    <property type="protein sequence ID" value="AAH72533.1"/>
    <property type="molecule type" value="mRNA"/>
</dbReference>
<dbReference type="PIR" id="B56711">
    <property type="entry name" value="B56711"/>
</dbReference>
<dbReference type="RefSeq" id="NP_001029042.1">
    <property type="nucleotide sequence ID" value="NM_001033870.1"/>
</dbReference>
<dbReference type="RefSeq" id="NP_075590.2">
    <property type="nucleotide sequence ID" value="NM_023102.2"/>
</dbReference>
<dbReference type="RefSeq" id="XP_006241064.1">
    <property type="nucleotide sequence ID" value="XM_006241002.3"/>
</dbReference>
<dbReference type="RefSeq" id="XP_063120298.1">
    <property type="nucleotide sequence ID" value="XM_063264228.1"/>
</dbReference>
<dbReference type="RefSeq" id="XP_063120299.1">
    <property type="nucleotide sequence ID" value="XM_063264229.1"/>
</dbReference>
<dbReference type="RefSeq" id="XP_063120300.1">
    <property type="nucleotide sequence ID" value="XM_063264230.1"/>
</dbReference>
<dbReference type="RefSeq" id="XP_063120301.1">
    <property type="nucleotide sequence ID" value="XM_063264231.1"/>
</dbReference>
<dbReference type="RefSeq" id="XP_063120302.1">
    <property type="nucleotide sequence ID" value="XM_063264232.1"/>
</dbReference>
<dbReference type="RefSeq" id="XP_063120303.1">
    <property type="nucleotide sequence ID" value="XM_063264233.1"/>
</dbReference>
<dbReference type="RefSeq" id="XP_063120304.1">
    <property type="nucleotide sequence ID" value="XM_063264234.1"/>
</dbReference>
<dbReference type="SMR" id="Q62762"/>
<dbReference type="FunCoup" id="Q62762">
    <property type="interactions" value="2777"/>
</dbReference>
<dbReference type="STRING" id="10116.ENSRNOP00000072196"/>
<dbReference type="PhosphoSitePlus" id="Q62762"/>
<dbReference type="SwissPalm" id="Q62762"/>
<dbReference type="jPOST" id="Q62762"/>
<dbReference type="PaxDb" id="10116-ENSRNOP00000025266"/>
<dbReference type="Ensembl" id="ENSRNOT00000080342.2">
    <property type="protein sequence ID" value="ENSRNOP00000072196.1"/>
    <property type="gene ID" value="ENSRNOG00000018529.8"/>
</dbReference>
<dbReference type="GeneID" id="65278"/>
<dbReference type="KEGG" id="rno:65278"/>
<dbReference type="UCSC" id="RGD:621407">
    <property type="organism name" value="rat"/>
</dbReference>
<dbReference type="AGR" id="RGD:621407"/>
<dbReference type="CTD" id="1455"/>
<dbReference type="RGD" id="621407">
    <property type="gene designation" value="Csnk1g2"/>
</dbReference>
<dbReference type="eggNOG" id="KOG1165">
    <property type="taxonomic scope" value="Eukaryota"/>
</dbReference>
<dbReference type="GeneTree" id="ENSGT00940000156470"/>
<dbReference type="HOGENOM" id="CLU_019279_2_0_1"/>
<dbReference type="InParanoid" id="Q62762"/>
<dbReference type="OrthoDB" id="5800476at2759"/>
<dbReference type="PhylomeDB" id="Q62762"/>
<dbReference type="BRENDA" id="2.7.11.1">
    <property type="organism ID" value="5301"/>
</dbReference>
<dbReference type="PRO" id="PR:Q62762"/>
<dbReference type="Proteomes" id="UP000002494">
    <property type="component" value="Chromosome 7"/>
</dbReference>
<dbReference type="Bgee" id="ENSRNOG00000018529">
    <property type="expression patterns" value="Expressed in testis and 20 other cell types or tissues"/>
</dbReference>
<dbReference type="ExpressionAtlas" id="Q62762">
    <property type="expression patterns" value="baseline and differential"/>
</dbReference>
<dbReference type="GO" id="GO:0005938">
    <property type="term" value="C:cell cortex"/>
    <property type="evidence" value="ECO:0007669"/>
    <property type="project" value="UniProtKB-SubCell"/>
</dbReference>
<dbReference type="GO" id="GO:0005737">
    <property type="term" value="C:cytoplasm"/>
    <property type="evidence" value="ECO:0000318"/>
    <property type="project" value="GO_Central"/>
</dbReference>
<dbReference type="GO" id="GO:0005634">
    <property type="term" value="C:nucleus"/>
    <property type="evidence" value="ECO:0000318"/>
    <property type="project" value="GO_Central"/>
</dbReference>
<dbReference type="GO" id="GO:0005886">
    <property type="term" value="C:plasma membrane"/>
    <property type="evidence" value="ECO:0000318"/>
    <property type="project" value="GO_Central"/>
</dbReference>
<dbReference type="GO" id="GO:0005524">
    <property type="term" value="F:ATP binding"/>
    <property type="evidence" value="ECO:0007669"/>
    <property type="project" value="UniProtKB-KW"/>
</dbReference>
<dbReference type="GO" id="GO:0106310">
    <property type="term" value="F:protein serine kinase activity"/>
    <property type="evidence" value="ECO:0007669"/>
    <property type="project" value="RHEA"/>
</dbReference>
<dbReference type="GO" id="GO:0004674">
    <property type="term" value="F:protein serine/threonine kinase activity"/>
    <property type="evidence" value="ECO:0000314"/>
    <property type="project" value="RGD"/>
</dbReference>
<dbReference type="GO" id="GO:0006897">
    <property type="term" value="P:endocytosis"/>
    <property type="evidence" value="ECO:0000318"/>
    <property type="project" value="GO_Central"/>
</dbReference>
<dbReference type="GO" id="GO:0090263">
    <property type="term" value="P:positive regulation of canonical Wnt signaling pathway"/>
    <property type="evidence" value="ECO:0000318"/>
    <property type="project" value="GO_Central"/>
</dbReference>
<dbReference type="GO" id="GO:0007165">
    <property type="term" value="P:signal transduction"/>
    <property type="evidence" value="ECO:0000318"/>
    <property type="project" value="GO_Central"/>
</dbReference>
<dbReference type="GO" id="GO:0016055">
    <property type="term" value="P:Wnt signaling pathway"/>
    <property type="evidence" value="ECO:0007669"/>
    <property type="project" value="UniProtKB-KW"/>
</dbReference>
<dbReference type="CDD" id="cd14126">
    <property type="entry name" value="STKc_CK1_gamma"/>
    <property type="match status" value="1"/>
</dbReference>
<dbReference type="FunFam" id="1.10.510.10:FF:001113">
    <property type="entry name" value="Casein kinase 1 gamma 2"/>
    <property type="match status" value="1"/>
</dbReference>
<dbReference type="FunFam" id="3.30.200.20:FF:000018">
    <property type="entry name" value="Casein kinase I isoform gamma-1"/>
    <property type="match status" value="1"/>
</dbReference>
<dbReference type="Gene3D" id="3.30.200.20">
    <property type="entry name" value="Phosphorylase Kinase, domain 1"/>
    <property type="match status" value="1"/>
</dbReference>
<dbReference type="Gene3D" id="1.10.510.10">
    <property type="entry name" value="Transferase(Phosphotransferase) domain 1"/>
    <property type="match status" value="1"/>
</dbReference>
<dbReference type="InterPro" id="IPR022247">
    <property type="entry name" value="Casein_kinase-1_gamma_C"/>
</dbReference>
<dbReference type="InterPro" id="IPR050235">
    <property type="entry name" value="CK1_Ser-Thr_kinase"/>
</dbReference>
<dbReference type="InterPro" id="IPR011009">
    <property type="entry name" value="Kinase-like_dom_sf"/>
</dbReference>
<dbReference type="InterPro" id="IPR000719">
    <property type="entry name" value="Prot_kinase_dom"/>
</dbReference>
<dbReference type="InterPro" id="IPR017441">
    <property type="entry name" value="Protein_kinase_ATP_BS"/>
</dbReference>
<dbReference type="InterPro" id="IPR008271">
    <property type="entry name" value="Ser/Thr_kinase_AS"/>
</dbReference>
<dbReference type="PANTHER" id="PTHR11909">
    <property type="entry name" value="CASEIN KINASE-RELATED"/>
    <property type="match status" value="1"/>
</dbReference>
<dbReference type="Pfam" id="PF12605">
    <property type="entry name" value="CK1gamma_C"/>
    <property type="match status" value="1"/>
</dbReference>
<dbReference type="Pfam" id="PF00069">
    <property type="entry name" value="Pkinase"/>
    <property type="match status" value="1"/>
</dbReference>
<dbReference type="SMART" id="SM00220">
    <property type="entry name" value="S_TKc"/>
    <property type="match status" value="1"/>
</dbReference>
<dbReference type="SUPFAM" id="SSF56112">
    <property type="entry name" value="Protein kinase-like (PK-like)"/>
    <property type="match status" value="1"/>
</dbReference>
<dbReference type="PROSITE" id="PS00107">
    <property type="entry name" value="PROTEIN_KINASE_ATP"/>
    <property type="match status" value="1"/>
</dbReference>
<dbReference type="PROSITE" id="PS50011">
    <property type="entry name" value="PROTEIN_KINASE_DOM"/>
    <property type="match status" value="1"/>
</dbReference>
<dbReference type="PROSITE" id="PS00108">
    <property type="entry name" value="PROTEIN_KINASE_ST"/>
    <property type="match status" value="1"/>
</dbReference>
<organism>
    <name type="scientific">Rattus norvegicus</name>
    <name type="common">Rat</name>
    <dbReference type="NCBI Taxonomy" id="10116"/>
    <lineage>
        <taxon>Eukaryota</taxon>
        <taxon>Metazoa</taxon>
        <taxon>Chordata</taxon>
        <taxon>Craniata</taxon>
        <taxon>Vertebrata</taxon>
        <taxon>Euteleostomi</taxon>
        <taxon>Mammalia</taxon>
        <taxon>Eutheria</taxon>
        <taxon>Euarchontoglires</taxon>
        <taxon>Glires</taxon>
        <taxon>Rodentia</taxon>
        <taxon>Myomorpha</taxon>
        <taxon>Muroidea</taxon>
        <taxon>Muridae</taxon>
        <taxon>Murinae</taxon>
        <taxon>Rattus</taxon>
    </lineage>
</organism>
<name>KC1G2_RAT</name>
<comment type="function">
    <text evidence="1 3 4">Serine/threonine-protein kinase. Casein kinases are operationally defined by their preferential utilization of acidic proteins such as caseins as substrates. It can phosphorylate a large number of proteins. Participates in Wnt signaling (By similarity). Phosphorylates COL4A3BP/CERT, MTA1 and SMAD3. SMAD3 phosphorylation promotes its ligand-dependent ubiquitination and subsequent proteasome degradation, thus inhibiting SMAD3-mediated TGF-beta responses. Hyperphosphorylation of the serine-repeat motif of COL4A3BP/CERT leads to its inactivation by dissociation from the Golgi complex, thus down-regulating ER-to-Golgi transport of ceramide and sphingomyelin synthesis. Triggers PER1 proteasomal degradation probably through phosphorylation (By similarity). Involved in brain development and vesicular trafficking and neurotransmitter releasing from small synaptic vesicles. Regulates fast synaptic transmission mediated by glutamate (By similarity). Involved in regulation of reactive oxygen species (ROS) levels (By similarity).</text>
</comment>
<comment type="catalytic activity">
    <reaction>
        <text>L-seryl-[protein] + ATP = O-phospho-L-seryl-[protein] + ADP + H(+)</text>
        <dbReference type="Rhea" id="RHEA:17989"/>
        <dbReference type="Rhea" id="RHEA-COMP:9863"/>
        <dbReference type="Rhea" id="RHEA-COMP:11604"/>
        <dbReference type="ChEBI" id="CHEBI:15378"/>
        <dbReference type="ChEBI" id="CHEBI:29999"/>
        <dbReference type="ChEBI" id="CHEBI:30616"/>
        <dbReference type="ChEBI" id="CHEBI:83421"/>
        <dbReference type="ChEBI" id="CHEBI:456216"/>
        <dbReference type="EC" id="2.7.11.1"/>
    </reaction>
</comment>
<comment type="catalytic activity">
    <reaction>
        <text>L-threonyl-[protein] + ATP = O-phospho-L-threonyl-[protein] + ADP + H(+)</text>
        <dbReference type="Rhea" id="RHEA:46608"/>
        <dbReference type="Rhea" id="RHEA-COMP:11060"/>
        <dbReference type="Rhea" id="RHEA-COMP:11605"/>
        <dbReference type="ChEBI" id="CHEBI:15378"/>
        <dbReference type="ChEBI" id="CHEBI:30013"/>
        <dbReference type="ChEBI" id="CHEBI:30616"/>
        <dbReference type="ChEBI" id="CHEBI:61977"/>
        <dbReference type="ChEBI" id="CHEBI:456216"/>
        <dbReference type="EC" id="2.7.11.1"/>
    </reaction>
</comment>
<comment type="activity regulation">
    <text evidence="3">Stimulated by estrogen.</text>
</comment>
<comment type="subunit">
    <text evidence="2 3">Monomer (By similarity). Interacts with MTA1 (short isoform) in the cytoplasm (By similarity). Interacts with SMAD3 (By similarity). Interacts with DUOXA2 (By similarity).</text>
</comment>
<comment type="subcellular location">
    <subcellularLocation>
        <location evidence="3">Cytoplasm</location>
        <location evidence="3">Cell cortex</location>
    </subcellularLocation>
    <subcellularLocation>
        <location evidence="3">Cytoplasm</location>
    </subcellularLocation>
</comment>
<comment type="tissue specificity">
    <text evidence="8">Testis.</text>
</comment>
<comment type="domain">
    <text evidence="3">The phospho-regulated basic and hydrophobic (PRBH) motif is sufficient and important for interaction with phospholipids permitting cortical localization. Phosphorylation of the PRBH motif by aPKC inhibits the association of the protein with the cortical membrane.</text>
</comment>
<comment type="PTM">
    <text evidence="3 8">Autophosphorylated (PubMed:7759525). Phosphorylated by aPKC which promotes dissociation from the cell cortex (By similarity).</text>
</comment>
<comment type="similarity">
    <text evidence="9">Belongs to the protein kinase superfamily. CK1 Ser/Thr protein kinase family. Casein kinase I subfamily.</text>
</comment>
<proteinExistence type="evidence at protein level"/>
<reference key="1">
    <citation type="journal article" date="1995" name="J. Biol. Chem.">
        <title>Casein kinase I gamma subfamily. Molecular cloning, expression, and characterization of three mammalian isoforms and complementation of defects in the Saccharomyces cerevisiae YCK genes.</title>
        <authorList>
            <person name="Zhai L."/>
            <person name="Graves P.R."/>
            <person name="Robinson L.C."/>
            <person name="Italiano M."/>
            <person name="Culbertson M.R."/>
            <person name="Rowles J."/>
            <person name="Cobb M.H."/>
            <person name="Depaoli-Roach A.A."/>
            <person name="Roach P.J."/>
        </authorList>
    </citation>
    <scope>NUCLEOTIDE SEQUENCE [MRNA]</scope>
    <scope>PHOSPHORYLATION</scope>
    <source>
        <tissue>Testis</tissue>
    </source>
</reference>
<reference key="2">
    <citation type="journal article" date="2004" name="Genome Res.">
        <title>The status, quality, and expansion of the NIH full-length cDNA project: the Mammalian Gene Collection (MGC).</title>
        <authorList>
            <consortium name="The MGC Project Team"/>
        </authorList>
    </citation>
    <scope>NUCLEOTIDE SEQUENCE [LARGE SCALE MRNA]</scope>
    <source>
        <tissue>Lung</tissue>
    </source>
</reference>
<feature type="chain" id="PRO_0000192844" description="Casein kinase I isoform gamma-2">
    <location>
        <begin position="1"/>
        <end position="415"/>
    </location>
</feature>
<feature type="domain" description="Protein kinase" evidence="5">
    <location>
        <begin position="46"/>
        <end position="316"/>
    </location>
</feature>
<feature type="region of interest" description="Disordered" evidence="7">
    <location>
        <begin position="1"/>
        <end position="37"/>
    </location>
</feature>
<feature type="region of interest" description="Phospho-regulated basic and hydrophobic (PRBH) motif" evidence="3">
    <location>
        <begin position="369"/>
        <end position="415"/>
    </location>
</feature>
<feature type="compositionally biased region" description="Basic and acidic residues" evidence="7">
    <location>
        <begin position="1"/>
        <end position="17"/>
    </location>
</feature>
<feature type="compositionally biased region" description="Polar residues" evidence="7">
    <location>
        <begin position="20"/>
        <end position="37"/>
    </location>
</feature>
<feature type="active site" description="Proton acceptor" evidence="5 6">
    <location>
        <position position="165"/>
    </location>
</feature>
<feature type="binding site" evidence="5">
    <location>
        <begin position="52"/>
        <end position="60"/>
    </location>
    <ligand>
        <name>ATP</name>
        <dbReference type="ChEBI" id="CHEBI:30616"/>
    </ligand>
</feature>
<feature type="binding site" evidence="5">
    <location>
        <position position="75"/>
    </location>
    <ligand>
        <name>ATP</name>
        <dbReference type="ChEBI" id="CHEBI:30616"/>
    </ligand>
</feature>
<feature type="sequence conflict" description="In Ref. 1; AAC52201." evidence="9" ref="1">
    <original>EL</original>
    <variation>DV</variation>
    <location>
        <begin position="59"/>
        <end position="60"/>
    </location>
</feature>
<feature type="sequence conflict" description="In Ref. 1; AAC52201." evidence="9" ref="1">
    <location>
        <position position="100"/>
    </location>
</feature>
<protein>
    <recommendedName>
        <fullName>Casein kinase I isoform gamma-2</fullName>
        <shortName>CKI-gamma 2</shortName>
        <ecNumber>2.7.11.1</ecNumber>
    </recommendedName>
</protein>
<gene>
    <name type="primary">Csnk1g2</name>
    <name type="synonym">Ck1g2</name>
</gene>
<sequence length="415" mass="47636">MDFDKKGGKGELEEGRRMSKTGTNRSNHGVRNSGTSSGVLMVGPNFRVGKKIGCGNFGELRLGKNLYTNEYVAIKLEPIKSRAPQLHLEYRFYKQLSTTEGVPQVYYFGPCGKYNAMVLELLGPSLEDLFDLCDRTFTLKTVLMIAIQLITRMEYVHTKSLIYRDVKPENFLVGRPGSKRQHSIHIIDFGLAKEYIDPETKKHIPYREHKSLTGTARYMSINTHLGKEQSRRDDLEALGHMFMYFLRGSLPWQGLKADTLKERYQKIGDTKRATPIEVLCESFPEEMATYLRYVRRLDFFEKPDYDYLRKLFTDLFDRSGYVFDYEYDWAGKPLPTPIGTVHPDVPSQPPHRDKAQLHTKNQALNSTNGELNTDDPTAGHSNAPIAAPAEVEVADETKCCCFFKRRKRKSLQRHK</sequence>
<keyword id="KW-0067">ATP-binding</keyword>
<keyword id="KW-0963">Cytoplasm</keyword>
<keyword id="KW-0418">Kinase</keyword>
<keyword id="KW-0547">Nucleotide-binding</keyword>
<keyword id="KW-0597">Phosphoprotein</keyword>
<keyword id="KW-1185">Reference proteome</keyword>
<keyword id="KW-0723">Serine/threonine-protein kinase</keyword>
<keyword id="KW-0808">Transferase</keyword>
<keyword id="KW-0879">Wnt signaling pathway</keyword>
<accession>Q62762</accession>
<accession>Q6IMY5</accession>